<proteinExistence type="evidence at protein level"/>
<dbReference type="EMBL" id="U63533">
    <property type="protein sequence ID" value="AAC50762.1"/>
    <property type="molecule type" value="mRNA"/>
</dbReference>
<dbReference type="EMBL" id="BT006915">
    <property type="protein sequence ID" value="AAP35561.1"/>
    <property type="molecule type" value="mRNA"/>
</dbReference>
<dbReference type="EMBL" id="AK303701">
    <property type="protein sequence ID" value="BAG64687.1"/>
    <property type="molecule type" value="mRNA"/>
</dbReference>
<dbReference type="EMBL" id="AC008763">
    <property type="status" value="NOT_ANNOTATED_CDS"/>
    <property type="molecule type" value="Genomic_DNA"/>
</dbReference>
<dbReference type="EMBL" id="CH471139">
    <property type="protein sequence ID" value="EAW69018.1"/>
    <property type="molecule type" value="Genomic_DNA"/>
</dbReference>
<dbReference type="EMBL" id="BC002869">
    <property type="protein sequence ID" value="AAH02869.1"/>
    <property type="molecule type" value="mRNA"/>
</dbReference>
<dbReference type="CCDS" id="CCDS12181.1">
    <molecule id="Q15833-1"/>
</dbReference>
<dbReference type="CCDS" id="CCDS45948.1">
    <molecule id="Q15833-2"/>
</dbReference>
<dbReference type="CCDS" id="CCDS62522.1">
    <molecule id="Q15833-3"/>
</dbReference>
<dbReference type="RefSeq" id="NP_001120868.1">
    <molecule id="Q15833-2"/>
    <property type="nucleotide sequence ID" value="NM_001127396.3"/>
</dbReference>
<dbReference type="RefSeq" id="NP_001258963.1">
    <molecule id="Q15833-3"/>
    <property type="nucleotide sequence ID" value="NM_001272034.2"/>
</dbReference>
<dbReference type="RefSeq" id="NP_008880.2">
    <molecule id="Q15833-1"/>
    <property type="nucleotide sequence ID" value="NM_006949.4"/>
</dbReference>
<dbReference type="PDB" id="4CCA">
    <property type="method" value="X-ray"/>
    <property type="resolution" value="2.60 A"/>
    <property type="chains" value="A=1-593"/>
</dbReference>
<dbReference type="PDBsum" id="4CCA"/>
<dbReference type="SMR" id="Q15833"/>
<dbReference type="BioGRID" id="112682">
    <property type="interactions" value="103"/>
</dbReference>
<dbReference type="FunCoup" id="Q15833">
    <property type="interactions" value="913"/>
</dbReference>
<dbReference type="IntAct" id="Q15833">
    <property type="interactions" value="38"/>
</dbReference>
<dbReference type="STRING" id="9606.ENSP00000413606"/>
<dbReference type="GlyGen" id="Q15833">
    <property type="glycosylation" value="2 sites, 1 O-linked glycan (1 site)"/>
</dbReference>
<dbReference type="iPTMnet" id="Q15833"/>
<dbReference type="MetOSite" id="Q15833"/>
<dbReference type="PhosphoSitePlus" id="Q15833"/>
<dbReference type="SwissPalm" id="Q15833"/>
<dbReference type="BioMuta" id="STXBP2"/>
<dbReference type="DMDM" id="313104015"/>
<dbReference type="OGP" id="Q15833"/>
<dbReference type="jPOST" id="Q15833"/>
<dbReference type="MassIVE" id="Q15833"/>
<dbReference type="PaxDb" id="9606-ENSP00000413606"/>
<dbReference type="PeptideAtlas" id="Q15833"/>
<dbReference type="ProteomicsDB" id="17549"/>
<dbReference type="ProteomicsDB" id="60782">
    <molecule id="Q15833-1"/>
</dbReference>
<dbReference type="ProteomicsDB" id="60783">
    <molecule id="Q15833-2"/>
</dbReference>
<dbReference type="Pumba" id="Q15833"/>
<dbReference type="Antibodypedia" id="2787">
    <property type="antibodies" value="212 antibodies from 29 providers"/>
</dbReference>
<dbReference type="DNASU" id="6813"/>
<dbReference type="Ensembl" id="ENST00000221283.10">
    <molecule id="Q15833-1"/>
    <property type="protein sequence ID" value="ENSP00000221283.4"/>
    <property type="gene ID" value="ENSG00000076944.18"/>
</dbReference>
<dbReference type="Ensembl" id="ENST00000414284.6">
    <molecule id="Q15833-2"/>
    <property type="protein sequence ID" value="ENSP00000409471.1"/>
    <property type="gene ID" value="ENSG00000076944.18"/>
</dbReference>
<dbReference type="Ensembl" id="ENST00000441779.6">
    <molecule id="Q15833-3"/>
    <property type="protein sequence ID" value="ENSP00000413606.2"/>
    <property type="gene ID" value="ENSG00000076944.18"/>
</dbReference>
<dbReference type="GeneID" id="6813"/>
<dbReference type="KEGG" id="hsa:6813"/>
<dbReference type="MANE-Select" id="ENST00000221283.10">
    <property type="protein sequence ID" value="ENSP00000221283.4"/>
    <property type="RefSeq nucleotide sequence ID" value="NM_006949.4"/>
    <property type="RefSeq protein sequence ID" value="NP_008880.2"/>
</dbReference>
<dbReference type="UCSC" id="uc002mha.6">
    <molecule id="Q15833-1"/>
    <property type="organism name" value="human"/>
</dbReference>
<dbReference type="AGR" id="HGNC:11445"/>
<dbReference type="CTD" id="6813"/>
<dbReference type="DisGeNET" id="6813"/>
<dbReference type="GeneCards" id="STXBP2"/>
<dbReference type="GeneReviews" id="STXBP2"/>
<dbReference type="HGNC" id="HGNC:11445">
    <property type="gene designation" value="STXBP2"/>
</dbReference>
<dbReference type="HPA" id="ENSG00000076944">
    <property type="expression patterns" value="Tissue enhanced (lymphoid)"/>
</dbReference>
<dbReference type="MalaCards" id="STXBP2"/>
<dbReference type="MIM" id="601717">
    <property type="type" value="gene"/>
</dbReference>
<dbReference type="MIM" id="613101">
    <property type="type" value="phenotype"/>
</dbReference>
<dbReference type="neXtProt" id="NX_Q15833"/>
<dbReference type="OpenTargets" id="ENSG00000076944"/>
<dbReference type="Orphanet" id="540">
    <property type="disease" value="Familial hemophagocytic lymphohistiocytosis"/>
</dbReference>
<dbReference type="PharmGKB" id="PA36242"/>
<dbReference type="VEuPathDB" id="HostDB:ENSG00000076944"/>
<dbReference type="eggNOG" id="KOG1300">
    <property type="taxonomic scope" value="Eukaryota"/>
</dbReference>
<dbReference type="GeneTree" id="ENSGT00940000160045"/>
<dbReference type="InParanoid" id="Q15833"/>
<dbReference type="OMA" id="LNSACKM"/>
<dbReference type="OrthoDB" id="2228at2759"/>
<dbReference type="PAN-GO" id="Q15833">
    <property type="GO annotations" value="8 GO annotations based on evolutionary models"/>
</dbReference>
<dbReference type="PhylomeDB" id="Q15833"/>
<dbReference type="TreeFam" id="TF313242"/>
<dbReference type="PathwayCommons" id="Q15833"/>
<dbReference type="Reactome" id="R-HSA-114608">
    <property type="pathway name" value="Platelet degranulation"/>
</dbReference>
<dbReference type="Reactome" id="R-HSA-449836">
    <property type="pathway name" value="Other interleukin signaling"/>
</dbReference>
<dbReference type="SignaLink" id="Q15833"/>
<dbReference type="SIGNOR" id="Q15833"/>
<dbReference type="BioGRID-ORCS" id="6813">
    <property type="hits" value="11 hits in 1151 CRISPR screens"/>
</dbReference>
<dbReference type="CD-CODE" id="91857CE7">
    <property type="entry name" value="Nucleolus"/>
</dbReference>
<dbReference type="ChiTaRS" id="STXBP2">
    <property type="organism name" value="human"/>
</dbReference>
<dbReference type="EvolutionaryTrace" id="Q15833"/>
<dbReference type="GeneWiki" id="Syntaxin_binding_protein_2"/>
<dbReference type="GenomeRNAi" id="6813"/>
<dbReference type="Pharos" id="Q15833">
    <property type="development level" value="Tbio"/>
</dbReference>
<dbReference type="PRO" id="PR:Q15833"/>
<dbReference type="Proteomes" id="UP000005640">
    <property type="component" value="Chromosome 19"/>
</dbReference>
<dbReference type="RNAct" id="Q15833">
    <property type="molecule type" value="protein"/>
</dbReference>
<dbReference type="Bgee" id="ENSG00000076944">
    <property type="expression patterns" value="Expressed in granulocyte and 146 other cell types or tissues"/>
</dbReference>
<dbReference type="ExpressionAtlas" id="Q15833">
    <property type="expression patterns" value="baseline and differential"/>
</dbReference>
<dbReference type="GO" id="GO:0016324">
    <property type="term" value="C:apical plasma membrane"/>
    <property type="evidence" value="ECO:0007669"/>
    <property type="project" value="Ensembl"/>
</dbReference>
<dbReference type="GO" id="GO:0042582">
    <property type="term" value="C:azurophil granule"/>
    <property type="evidence" value="ECO:0000314"/>
    <property type="project" value="UniProtKB"/>
</dbReference>
<dbReference type="GO" id="GO:0044194">
    <property type="term" value="C:cytolytic granule"/>
    <property type="evidence" value="ECO:0000314"/>
    <property type="project" value="UniProtKB"/>
</dbReference>
<dbReference type="GO" id="GO:0005829">
    <property type="term" value="C:cytosol"/>
    <property type="evidence" value="ECO:0000314"/>
    <property type="project" value="HPA"/>
</dbReference>
<dbReference type="GO" id="GO:0070062">
    <property type="term" value="C:extracellular exosome"/>
    <property type="evidence" value="ECO:0007005"/>
    <property type="project" value="UniProtKB"/>
</dbReference>
<dbReference type="GO" id="GO:0005576">
    <property type="term" value="C:extracellular region"/>
    <property type="evidence" value="ECO:0000304"/>
    <property type="project" value="Reactome"/>
</dbReference>
<dbReference type="GO" id="GO:0045335">
    <property type="term" value="C:phagocytic vesicle"/>
    <property type="evidence" value="ECO:0007669"/>
    <property type="project" value="Ensembl"/>
</dbReference>
<dbReference type="GO" id="GO:0005886">
    <property type="term" value="C:plasma membrane"/>
    <property type="evidence" value="ECO:0000314"/>
    <property type="project" value="UniProtKB"/>
</dbReference>
<dbReference type="GO" id="GO:0098793">
    <property type="term" value="C:presynapse"/>
    <property type="evidence" value="ECO:0007669"/>
    <property type="project" value="GOC"/>
</dbReference>
<dbReference type="GO" id="GO:0030141">
    <property type="term" value="C:secretory granule"/>
    <property type="evidence" value="ECO:0000318"/>
    <property type="project" value="GO_Central"/>
</dbReference>
<dbReference type="GO" id="GO:0042581">
    <property type="term" value="C:specific granule"/>
    <property type="evidence" value="ECO:0000314"/>
    <property type="project" value="UniProtKB"/>
</dbReference>
<dbReference type="GO" id="GO:0070820">
    <property type="term" value="C:tertiary granule"/>
    <property type="evidence" value="ECO:0000314"/>
    <property type="project" value="UniProtKB"/>
</dbReference>
<dbReference type="GO" id="GO:0042589">
    <property type="term" value="C:zymogen granule membrane"/>
    <property type="evidence" value="ECO:0007669"/>
    <property type="project" value="Ensembl"/>
</dbReference>
<dbReference type="GO" id="GO:0017075">
    <property type="term" value="F:syntaxin-1 binding"/>
    <property type="evidence" value="ECO:0000318"/>
    <property type="project" value="GO_Central"/>
</dbReference>
<dbReference type="GO" id="GO:0030348">
    <property type="term" value="F:syntaxin-3 binding"/>
    <property type="evidence" value="ECO:0000353"/>
    <property type="project" value="UniProtKB"/>
</dbReference>
<dbReference type="GO" id="GO:0071346">
    <property type="term" value="P:cellular response to type II interferon"/>
    <property type="evidence" value="ECO:0007669"/>
    <property type="project" value="Ensembl"/>
</dbReference>
<dbReference type="GO" id="GO:0006886">
    <property type="term" value="P:intracellular protein transport"/>
    <property type="evidence" value="ECO:0000318"/>
    <property type="project" value="GO_Central"/>
</dbReference>
<dbReference type="GO" id="GO:0001909">
    <property type="term" value="P:leukocyte mediated cytotoxicity"/>
    <property type="evidence" value="ECO:0000315"/>
    <property type="project" value="UniProtKB"/>
</dbReference>
<dbReference type="GO" id="GO:0043312">
    <property type="term" value="P:neutrophil degranulation"/>
    <property type="evidence" value="ECO:0000270"/>
    <property type="project" value="UniProtKB"/>
</dbReference>
<dbReference type="GO" id="GO:0099525">
    <property type="term" value="P:presynaptic dense core vesicle exocytosis"/>
    <property type="evidence" value="ECO:0000318"/>
    <property type="project" value="GO_Central"/>
</dbReference>
<dbReference type="GO" id="GO:0043304">
    <property type="term" value="P:regulation of mast cell degranulation"/>
    <property type="evidence" value="ECO:0000250"/>
    <property type="project" value="UniProtKB"/>
</dbReference>
<dbReference type="GO" id="GO:0006904">
    <property type="term" value="P:vesicle docking involved in exocytosis"/>
    <property type="evidence" value="ECO:0000318"/>
    <property type="project" value="GO_Central"/>
</dbReference>
<dbReference type="FunFam" id="3.40.50.2060:FF:000001">
    <property type="entry name" value="syntaxin-binding protein 1 isoform X2"/>
    <property type="match status" value="1"/>
</dbReference>
<dbReference type="FunFam" id="3.90.830.10:FF:000001">
    <property type="entry name" value="syntaxin-binding protein 1 isoform X2"/>
    <property type="match status" value="1"/>
</dbReference>
<dbReference type="Gene3D" id="1.25.40.60">
    <property type="match status" value="1"/>
</dbReference>
<dbReference type="Gene3D" id="3.40.50.1910">
    <property type="match status" value="1"/>
</dbReference>
<dbReference type="Gene3D" id="3.40.50.2060">
    <property type="match status" value="1"/>
</dbReference>
<dbReference type="Gene3D" id="3.90.830.10">
    <property type="entry name" value="Syntaxin Binding Protein 1, Chain A, domain 2"/>
    <property type="match status" value="1"/>
</dbReference>
<dbReference type="InterPro" id="IPR043154">
    <property type="entry name" value="Sec-1-like_dom1"/>
</dbReference>
<dbReference type="InterPro" id="IPR043127">
    <property type="entry name" value="Sec-1-like_dom3a"/>
</dbReference>
<dbReference type="InterPro" id="IPR001619">
    <property type="entry name" value="Sec1-like"/>
</dbReference>
<dbReference type="InterPro" id="IPR027482">
    <property type="entry name" value="Sec1-like_dom2"/>
</dbReference>
<dbReference type="InterPro" id="IPR036045">
    <property type="entry name" value="Sec1-like_sf"/>
</dbReference>
<dbReference type="PANTHER" id="PTHR11679">
    <property type="entry name" value="VESICLE PROTEIN SORTING-ASSOCIATED"/>
    <property type="match status" value="1"/>
</dbReference>
<dbReference type="Pfam" id="PF00995">
    <property type="entry name" value="Sec1"/>
    <property type="match status" value="1"/>
</dbReference>
<dbReference type="PIRSF" id="PIRSF005715">
    <property type="entry name" value="VPS45_Sec1"/>
    <property type="match status" value="1"/>
</dbReference>
<dbReference type="SUPFAM" id="SSF56815">
    <property type="entry name" value="Sec1/munc18-like (SM) proteins"/>
    <property type="match status" value="1"/>
</dbReference>
<evidence type="ECO:0000250" key="1"/>
<evidence type="ECO:0000256" key="2">
    <source>
        <dbReference type="SAM" id="MobiDB-lite"/>
    </source>
</evidence>
<evidence type="ECO:0000269" key="3">
    <source>
    </source>
</evidence>
<evidence type="ECO:0000269" key="4">
    <source>
    </source>
</evidence>
<evidence type="ECO:0000269" key="5">
    <source>
    </source>
</evidence>
<evidence type="ECO:0000269" key="6">
    <source>
    </source>
</evidence>
<evidence type="ECO:0000303" key="7">
    <source>
    </source>
</evidence>
<evidence type="ECO:0000303" key="8">
    <source>
    </source>
</evidence>
<evidence type="ECO:0000303" key="9">
    <source ref="2"/>
</evidence>
<evidence type="ECO:0000305" key="10"/>
<evidence type="ECO:0007829" key="11">
    <source>
        <dbReference type="PDB" id="4CCA"/>
    </source>
</evidence>
<name>STXB2_HUMAN</name>
<protein>
    <recommendedName>
        <fullName>Syntaxin-binding protein 2</fullName>
    </recommendedName>
    <alternativeName>
        <fullName>Protein unc-18 homolog 2</fullName>
        <shortName>Unc18-2</shortName>
    </alternativeName>
    <alternativeName>
        <fullName>Protein unc-18 homolog B</fullName>
        <shortName>Unc-18B</shortName>
    </alternativeName>
</protein>
<feature type="chain" id="PRO_0000206281" description="Syntaxin-binding protein 2">
    <location>
        <begin position="1"/>
        <end position="593"/>
    </location>
</feature>
<feature type="region of interest" description="Disordered" evidence="2">
    <location>
        <begin position="444"/>
        <end position="466"/>
    </location>
</feature>
<feature type="compositionally biased region" description="Polar residues" evidence="2">
    <location>
        <begin position="446"/>
        <end position="459"/>
    </location>
</feature>
<feature type="splice variant" id="VSP_055157" description="In isoform 3." evidence="7">
    <original>K</original>
    <variation>KAQAQRVIHLPQ</variation>
    <location>
        <position position="82"/>
    </location>
</feature>
<feature type="splice variant" id="VSP_040121" description="In isoform 2." evidence="8 9">
    <location>
        <begin position="83"/>
        <end position="85"/>
    </location>
</feature>
<feature type="sequence variant" id="VAR_063814" description="In FHL5; dbSNP:rs121918541." evidence="4">
    <original>L</original>
    <variation>P</variation>
    <location>
        <position position="209"/>
    </location>
</feature>
<feature type="sequence variant" id="VAR_063815" description="In FHL5; leads to a complete loss of the ability to interact with STX11." evidence="4">
    <location>
        <position position="232"/>
    </location>
</feature>
<feature type="sequence variant" id="VAR_063816" description="In FHL5; leads to a complete loss of the ability to interact with STX11; dbSNP:rs746897867." evidence="4">
    <original>R</original>
    <variation>H</variation>
    <location>
        <position position="292"/>
    </location>
</feature>
<feature type="sequence variant" id="VAR_063817" description="In FHL5; leads to a complete loss of the ability to interact with STX11; dbSNP:rs773360200." evidence="4">
    <original>R</original>
    <variation>Q</variation>
    <location>
        <position position="405"/>
    </location>
</feature>
<feature type="sequence variant" id="VAR_063818" description="In FHL5; leads to a complete loss of the ability to interact with STX11; dbSNP:rs769717341." evidence="4">
    <original>R</original>
    <variation>W</variation>
    <location>
        <position position="405"/>
    </location>
</feature>
<feature type="sequence variant" id="VAR_063819" description="In FHL5; leads to a complete loss of the ability to interact with STX11; dbSNP:rs121918540." evidence="4 5">
    <original>P</original>
    <variation>L</variation>
    <location>
        <position position="477"/>
    </location>
</feature>
<feature type="sequence variant" id="VAR_014934" description="In dbSNP:rs6791." evidence="3 6">
    <original>I</original>
    <variation>V</variation>
    <location>
        <position position="526"/>
    </location>
</feature>
<feature type="sequence conflict" description="In Ref. 3; BAG64687." evidence="10" ref="3">
    <original>H</original>
    <variation>R</variation>
    <location>
        <position position="348"/>
    </location>
</feature>
<feature type="helix" evidence="11">
    <location>
        <begin position="6"/>
        <end position="15"/>
    </location>
</feature>
<feature type="turn" evidence="11">
    <location>
        <begin position="16"/>
        <end position="22"/>
    </location>
</feature>
<feature type="strand" evidence="11">
    <location>
        <begin position="29"/>
        <end position="33"/>
    </location>
</feature>
<feature type="helix" evidence="11">
    <location>
        <begin position="35"/>
        <end position="42"/>
    </location>
</feature>
<feature type="helix" evidence="11">
    <location>
        <begin position="47"/>
        <end position="51"/>
    </location>
</feature>
<feature type="turn" evidence="11">
    <location>
        <begin position="52"/>
        <end position="54"/>
    </location>
</feature>
<feature type="strand" evidence="11">
    <location>
        <begin position="55"/>
        <end position="58"/>
    </location>
</feature>
<feature type="strand" evidence="11">
    <location>
        <begin position="71"/>
        <end position="77"/>
    </location>
</feature>
<feature type="helix" evidence="11">
    <location>
        <begin position="81"/>
        <end position="89"/>
    </location>
</feature>
<feature type="strand" evidence="11">
    <location>
        <begin position="102"/>
        <end position="108"/>
    </location>
</feature>
<feature type="helix" evidence="11">
    <location>
        <begin position="112"/>
        <end position="119"/>
    </location>
</feature>
<feature type="helix" evidence="11">
    <location>
        <begin position="123"/>
        <end position="126"/>
    </location>
</feature>
<feature type="strand" evidence="11">
    <location>
        <begin position="127"/>
        <end position="132"/>
    </location>
</feature>
<feature type="strand" evidence="11">
    <location>
        <begin position="141"/>
        <end position="146"/>
    </location>
</feature>
<feature type="helix" evidence="11">
    <location>
        <begin position="152"/>
        <end position="157"/>
    </location>
</feature>
<feature type="helix" evidence="11">
    <location>
        <begin position="159"/>
        <end position="164"/>
    </location>
</feature>
<feature type="helix" evidence="11">
    <location>
        <begin position="165"/>
        <end position="182"/>
    </location>
</feature>
<feature type="strand" evidence="11">
    <location>
        <begin position="188"/>
        <end position="191"/>
    </location>
</feature>
<feature type="strand" evidence="11">
    <location>
        <begin position="193"/>
        <end position="195"/>
    </location>
</feature>
<feature type="helix" evidence="11">
    <location>
        <begin position="196"/>
        <end position="215"/>
    </location>
</feature>
<feature type="turn" evidence="11">
    <location>
        <begin position="217"/>
        <end position="220"/>
    </location>
</feature>
<feature type="helix" evidence="11">
    <location>
        <begin position="225"/>
        <end position="227"/>
    </location>
</feature>
<feature type="strand" evidence="11">
    <location>
        <begin position="229"/>
        <end position="233"/>
    </location>
</feature>
<feature type="helix" evidence="11">
    <location>
        <begin position="235"/>
        <end position="237"/>
    </location>
</feature>
<feature type="helix" evidence="11">
    <location>
        <begin position="241"/>
        <end position="243"/>
    </location>
</feature>
<feature type="helix" evidence="11">
    <location>
        <begin position="249"/>
        <end position="256"/>
    </location>
</feature>
<feature type="strand" evidence="11">
    <location>
        <begin position="263"/>
        <end position="267"/>
    </location>
</feature>
<feature type="strand" evidence="11">
    <location>
        <begin position="276"/>
        <end position="280"/>
    </location>
</feature>
<feature type="strand" evidence="11">
    <location>
        <begin position="282"/>
        <end position="284"/>
    </location>
</feature>
<feature type="helix" evidence="11">
    <location>
        <begin position="286"/>
        <end position="291"/>
    </location>
</feature>
<feature type="turn" evidence="11">
    <location>
        <begin position="296"/>
        <end position="298"/>
    </location>
</feature>
<feature type="helix" evidence="11">
    <location>
        <begin position="299"/>
        <end position="314"/>
    </location>
</feature>
<feature type="helix" evidence="11">
    <location>
        <begin position="327"/>
        <end position="331"/>
    </location>
</feature>
<feature type="helix" evidence="11">
    <location>
        <begin position="333"/>
        <end position="357"/>
    </location>
</feature>
<feature type="helix" evidence="11">
    <location>
        <begin position="360"/>
        <end position="373"/>
    </location>
</feature>
<feature type="helix" evidence="11">
    <location>
        <begin position="385"/>
        <end position="393"/>
    </location>
</feature>
<feature type="helix" evidence="11">
    <location>
        <begin position="400"/>
        <end position="414"/>
    </location>
</feature>
<feature type="helix" evidence="11">
    <location>
        <begin position="419"/>
        <end position="428"/>
    </location>
</feature>
<feature type="helix" evidence="11">
    <location>
        <begin position="432"/>
        <end position="434"/>
    </location>
</feature>
<feature type="helix" evidence="11">
    <location>
        <begin position="435"/>
        <end position="439"/>
    </location>
</feature>
<feature type="helix" evidence="11">
    <location>
        <begin position="440"/>
        <end position="443"/>
    </location>
</feature>
<feature type="helix" evidence="11">
    <location>
        <begin position="478"/>
        <end position="487"/>
    </location>
</feature>
<feature type="turn" evidence="11">
    <location>
        <begin position="493"/>
        <end position="495"/>
    </location>
</feature>
<feature type="strand" evidence="11">
    <location>
        <begin position="498"/>
        <end position="500"/>
    </location>
</feature>
<feature type="strand" evidence="11">
    <location>
        <begin position="533"/>
        <end position="538"/>
    </location>
</feature>
<feature type="helix" evidence="11">
    <location>
        <begin position="544"/>
        <end position="556"/>
    </location>
</feature>
<feature type="turn" evidence="11">
    <location>
        <begin position="557"/>
        <end position="559"/>
    </location>
</feature>
<feature type="strand" evidence="11">
    <location>
        <begin position="562"/>
        <end position="570"/>
    </location>
</feature>
<feature type="helix" evidence="11">
    <location>
        <begin position="573"/>
        <end position="582"/>
    </location>
</feature>
<comment type="function">
    <text evidence="4 5">Involved in intracellular vesicle trafficking and vesicle fusion with membranes. Contributes to the granule exocytosis machinery through interaction with soluble N-ethylmaleimide-sensitive factor attachment protein receptor (SNARE) proteins that regulate membrane fusion. Regulates cytotoxic granule exocytosis in natural killer (NK) cells.</text>
</comment>
<comment type="subunit">
    <text evidence="1 4 5">Interacts with STX1A, STX2 and STX3 (By similarity). Interacts with STX11.</text>
</comment>
<comment type="interaction">
    <interactant intactId="EBI-4401015">
        <id>Q15833</id>
    </interactant>
    <interactant intactId="EBI-714135">
        <id>O75558</id>
        <label>STX11</label>
    </interactant>
    <organismsDiffer>false</organismsDiffer>
    <experiments>6</experiments>
</comment>
<comment type="alternative products">
    <event type="alternative splicing"/>
    <isoform>
        <id>Q15833-1</id>
        <name>1</name>
        <sequence type="displayed"/>
    </isoform>
    <isoform>
        <id>Q15833-2</id>
        <name>2</name>
        <sequence type="described" ref="VSP_040121"/>
    </isoform>
    <isoform>
        <id>Q15833-3</id>
        <name>3</name>
        <sequence type="described" ref="VSP_055157"/>
    </isoform>
</comment>
<comment type="tissue specificity">
    <text>Placenta, lung, liver, kidney and pancreas, as well as in peripheral blood lymphocytes.</text>
</comment>
<comment type="disease" evidence="4 5">
    <disease id="DI-02796">
        <name>Hemophagocytic lymphohistiocytosis, familial, 5, with or without microvillus inclusion disease</name>
        <acronym>FHL5</acronym>
        <description>A rare, autosomal recessive disorder characterized by immune dysregulation with hypercytokinemia, defective function of natural killer cell, and massive infiltration of several organs by activated lymphocytes and macrophages. The clinical features of the disease include fever, hepatosplenomegaly, cytopenia, and less frequently neurological abnormalities ranging from irritability and hypotonia to seizures, cranial nerve deficits and ataxia. Some patients may present in early infancy with severe diarrhea, prior to the onset of typical FHL features, whereas others present later in childhood and have a more protracted course without diarrhea. The early-onset diarrhea is due to enteropathy reminiscent of microvillus inclusion disease.</description>
        <dbReference type="MIM" id="613101"/>
    </disease>
    <text>The disease is caused by variants affecting the gene represented in this entry.</text>
</comment>
<comment type="similarity">
    <text evidence="10">Belongs to the STXBP/unc-18/SEC1 family.</text>
</comment>
<organism>
    <name type="scientific">Homo sapiens</name>
    <name type="common">Human</name>
    <dbReference type="NCBI Taxonomy" id="9606"/>
    <lineage>
        <taxon>Eukaryota</taxon>
        <taxon>Metazoa</taxon>
        <taxon>Chordata</taxon>
        <taxon>Craniata</taxon>
        <taxon>Vertebrata</taxon>
        <taxon>Euteleostomi</taxon>
        <taxon>Mammalia</taxon>
        <taxon>Eutheria</taxon>
        <taxon>Euarchontoglires</taxon>
        <taxon>Primates</taxon>
        <taxon>Haplorrhini</taxon>
        <taxon>Catarrhini</taxon>
        <taxon>Hominidae</taxon>
        <taxon>Homo</taxon>
    </lineage>
</organism>
<keyword id="KW-0002">3D-structure</keyword>
<keyword id="KW-0025">Alternative splicing</keyword>
<keyword id="KW-0225">Disease variant</keyword>
<keyword id="KW-0268">Exocytosis</keyword>
<keyword id="KW-0653">Protein transport</keyword>
<keyword id="KW-1267">Proteomics identification</keyword>
<keyword id="KW-1185">Reference proteome</keyword>
<keyword id="KW-0813">Transport</keyword>
<reference key="1">
    <citation type="journal article" date="1996" name="Genomics">
        <title>Molecular characterization of a nonneuronal human UNC18 homolog.</title>
        <authorList>
            <person name="Ziegler S.F."/>
            <person name="Mortrud M.T."/>
            <person name="Swartz A.R."/>
            <person name="Baker E."/>
            <person name="Sutherland G.R."/>
            <person name="Burmeister M."/>
            <person name="Mulligan J.T."/>
        </authorList>
    </citation>
    <scope>NUCLEOTIDE SEQUENCE [MRNA] (ISOFORM 1)</scope>
    <scope>VARIANT VAL-526</scope>
</reference>
<reference key="2">
    <citation type="submission" date="2003-05" db="EMBL/GenBank/DDBJ databases">
        <title>Cloning of human full-length CDSs in BD Creator(TM) system donor vector.</title>
        <authorList>
            <person name="Kalnine N."/>
            <person name="Chen X."/>
            <person name="Rolfs A."/>
            <person name="Halleck A."/>
            <person name="Hines L."/>
            <person name="Eisenstein S."/>
            <person name="Koundinya M."/>
            <person name="Raphael J."/>
            <person name="Moreira D."/>
            <person name="Kelley T."/>
            <person name="LaBaer J."/>
            <person name="Lin Y."/>
            <person name="Phelan M."/>
            <person name="Farmer A."/>
        </authorList>
    </citation>
    <scope>NUCLEOTIDE SEQUENCE [LARGE SCALE MRNA] (ISOFORM 2)</scope>
</reference>
<reference key="3">
    <citation type="journal article" date="2004" name="Nat. Genet.">
        <title>Complete sequencing and characterization of 21,243 full-length human cDNAs.</title>
        <authorList>
            <person name="Ota T."/>
            <person name="Suzuki Y."/>
            <person name="Nishikawa T."/>
            <person name="Otsuki T."/>
            <person name="Sugiyama T."/>
            <person name="Irie R."/>
            <person name="Wakamatsu A."/>
            <person name="Hayashi K."/>
            <person name="Sato H."/>
            <person name="Nagai K."/>
            <person name="Kimura K."/>
            <person name="Makita H."/>
            <person name="Sekine M."/>
            <person name="Obayashi M."/>
            <person name="Nishi T."/>
            <person name="Shibahara T."/>
            <person name="Tanaka T."/>
            <person name="Ishii S."/>
            <person name="Yamamoto J."/>
            <person name="Saito K."/>
            <person name="Kawai Y."/>
            <person name="Isono Y."/>
            <person name="Nakamura Y."/>
            <person name="Nagahari K."/>
            <person name="Murakami K."/>
            <person name="Yasuda T."/>
            <person name="Iwayanagi T."/>
            <person name="Wagatsuma M."/>
            <person name="Shiratori A."/>
            <person name="Sudo H."/>
            <person name="Hosoiri T."/>
            <person name="Kaku Y."/>
            <person name="Kodaira H."/>
            <person name="Kondo H."/>
            <person name="Sugawara M."/>
            <person name="Takahashi M."/>
            <person name="Kanda K."/>
            <person name="Yokoi T."/>
            <person name="Furuya T."/>
            <person name="Kikkawa E."/>
            <person name="Omura Y."/>
            <person name="Abe K."/>
            <person name="Kamihara K."/>
            <person name="Katsuta N."/>
            <person name="Sato K."/>
            <person name="Tanikawa M."/>
            <person name="Yamazaki M."/>
            <person name="Ninomiya K."/>
            <person name="Ishibashi T."/>
            <person name="Yamashita H."/>
            <person name="Murakawa K."/>
            <person name="Fujimori K."/>
            <person name="Tanai H."/>
            <person name="Kimata M."/>
            <person name="Watanabe M."/>
            <person name="Hiraoka S."/>
            <person name="Chiba Y."/>
            <person name="Ishida S."/>
            <person name="Ono Y."/>
            <person name="Takiguchi S."/>
            <person name="Watanabe S."/>
            <person name="Yosida M."/>
            <person name="Hotuta T."/>
            <person name="Kusano J."/>
            <person name="Kanehori K."/>
            <person name="Takahashi-Fujii A."/>
            <person name="Hara H."/>
            <person name="Tanase T.-O."/>
            <person name="Nomura Y."/>
            <person name="Togiya S."/>
            <person name="Komai F."/>
            <person name="Hara R."/>
            <person name="Takeuchi K."/>
            <person name="Arita M."/>
            <person name="Imose N."/>
            <person name="Musashino K."/>
            <person name="Yuuki H."/>
            <person name="Oshima A."/>
            <person name="Sasaki N."/>
            <person name="Aotsuka S."/>
            <person name="Yoshikawa Y."/>
            <person name="Matsunawa H."/>
            <person name="Ichihara T."/>
            <person name="Shiohata N."/>
            <person name="Sano S."/>
            <person name="Moriya S."/>
            <person name="Momiyama H."/>
            <person name="Satoh N."/>
            <person name="Takami S."/>
            <person name="Terashima Y."/>
            <person name="Suzuki O."/>
            <person name="Nakagawa S."/>
            <person name="Senoh A."/>
            <person name="Mizoguchi H."/>
            <person name="Goto Y."/>
            <person name="Shimizu F."/>
            <person name="Wakebe H."/>
            <person name="Hishigaki H."/>
            <person name="Watanabe T."/>
            <person name="Sugiyama A."/>
            <person name="Takemoto M."/>
            <person name="Kawakami B."/>
            <person name="Yamazaki M."/>
            <person name="Watanabe K."/>
            <person name="Kumagai A."/>
            <person name="Itakura S."/>
            <person name="Fukuzumi Y."/>
            <person name="Fujimori Y."/>
            <person name="Komiyama M."/>
            <person name="Tashiro H."/>
            <person name="Tanigami A."/>
            <person name="Fujiwara T."/>
            <person name="Ono T."/>
            <person name="Yamada K."/>
            <person name="Fujii Y."/>
            <person name="Ozaki K."/>
            <person name="Hirao M."/>
            <person name="Ohmori Y."/>
            <person name="Kawabata A."/>
            <person name="Hikiji T."/>
            <person name="Kobatake N."/>
            <person name="Inagaki H."/>
            <person name="Ikema Y."/>
            <person name="Okamoto S."/>
            <person name="Okitani R."/>
            <person name="Kawakami T."/>
            <person name="Noguchi S."/>
            <person name="Itoh T."/>
            <person name="Shigeta K."/>
            <person name="Senba T."/>
            <person name="Matsumura K."/>
            <person name="Nakajima Y."/>
            <person name="Mizuno T."/>
            <person name="Morinaga M."/>
            <person name="Sasaki M."/>
            <person name="Togashi T."/>
            <person name="Oyama M."/>
            <person name="Hata H."/>
            <person name="Watanabe M."/>
            <person name="Komatsu T."/>
            <person name="Mizushima-Sugano J."/>
            <person name="Satoh T."/>
            <person name="Shirai Y."/>
            <person name="Takahashi Y."/>
            <person name="Nakagawa K."/>
            <person name="Okumura K."/>
            <person name="Nagase T."/>
            <person name="Nomura N."/>
            <person name="Kikuchi H."/>
            <person name="Masuho Y."/>
            <person name="Yamashita R."/>
            <person name="Nakai K."/>
            <person name="Yada T."/>
            <person name="Nakamura Y."/>
            <person name="Ohara O."/>
            <person name="Isogai T."/>
            <person name="Sugano S."/>
        </authorList>
    </citation>
    <scope>NUCLEOTIDE SEQUENCE [LARGE SCALE MRNA] (ISOFORM 3)</scope>
    <scope>VARIANT VAL-526</scope>
    <source>
        <tissue>Kidney</tissue>
    </source>
</reference>
<reference key="4">
    <citation type="journal article" date="2004" name="Nature">
        <title>The DNA sequence and biology of human chromosome 19.</title>
        <authorList>
            <person name="Grimwood J."/>
            <person name="Gordon L.A."/>
            <person name="Olsen A.S."/>
            <person name="Terry A."/>
            <person name="Schmutz J."/>
            <person name="Lamerdin J.E."/>
            <person name="Hellsten U."/>
            <person name="Goodstein D."/>
            <person name="Couronne O."/>
            <person name="Tran-Gyamfi M."/>
            <person name="Aerts A."/>
            <person name="Altherr M."/>
            <person name="Ashworth L."/>
            <person name="Bajorek E."/>
            <person name="Black S."/>
            <person name="Branscomb E."/>
            <person name="Caenepeel S."/>
            <person name="Carrano A.V."/>
            <person name="Caoile C."/>
            <person name="Chan Y.M."/>
            <person name="Christensen M."/>
            <person name="Cleland C.A."/>
            <person name="Copeland A."/>
            <person name="Dalin E."/>
            <person name="Dehal P."/>
            <person name="Denys M."/>
            <person name="Detter J.C."/>
            <person name="Escobar J."/>
            <person name="Flowers D."/>
            <person name="Fotopulos D."/>
            <person name="Garcia C."/>
            <person name="Georgescu A.M."/>
            <person name="Glavina T."/>
            <person name="Gomez M."/>
            <person name="Gonzales E."/>
            <person name="Groza M."/>
            <person name="Hammon N."/>
            <person name="Hawkins T."/>
            <person name="Haydu L."/>
            <person name="Ho I."/>
            <person name="Huang W."/>
            <person name="Israni S."/>
            <person name="Jett J."/>
            <person name="Kadner K."/>
            <person name="Kimball H."/>
            <person name="Kobayashi A."/>
            <person name="Larionov V."/>
            <person name="Leem S.-H."/>
            <person name="Lopez F."/>
            <person name="Lou Y."/>
            <person name="Lowry S."/>
            <person name="Malfatti S."/>
            <person name="Martinez D."/>
            <person name="McCready P.M."/>
            <person name="Medina C."/>
            <person name="Morgan J."/>
            <person name="Nelson K."/>
            <person name="Nolan M."/>
            <person name="Ovcharenko I."/>
            <person name="Pitluck S."/>
            <person name="Pollard M."/>
            <person name="Popkie A.P."/>
            <person name="Predki P."/>
            <person name="Quan G."/>
            <person name="Ramirez L."/>
            <person name="Rash S."/>
            <person name="Retterer J."/>
            <person name="Rodriguez A."/>
            <person name="Rogers S."/>
            <person name="Salamov A."/>
            <person name="Salazar A."/>
            <person name="She X."/>
            <person name="Smith D."/>
            <person name="Slezak T."/>
            <person name="Solovyev V."/>
            <person name="Thayer N."/>
            <person name="Tice H."/>
            <person name="Tsai M."/>
            <person name="Ustaszewska A."/>
            <person name="Vo N."/>
            <person name="Wagner M."/>
            <person name="Wheeler J."/>
            <person name="Wu K."/>
            <person name="Xie G."/>
            <person name="Yang J."/>
            <person name="Dubchak I."/>
            <person name="Furey T.S."/>
            <person name="DeJong P."/>
            <person name="Dickson M."/>
            <person name="Gordon D."/>
            <person name="Eichler E.E."/>
            <person name="Pennacchio L.A."/>
            <person name="Richardson P."/>
            <person name="Stubbs L."/>
            <person name="Rokhsar D.S."/>
            <person name="Myers R.M."/>
            <person name="Rubin E.M."/>
            <person name="Lucas S.M."/>
        </authorList>
    </citation>
    <scope>NUCLEOTIDE SEQUENCE [LARGE SCALE GENOMIC DNA]</scope>
</reference>
<reference key="5">
    <citation type="submission" date="2005-09" db="EMBL/GenBank/DDBJ databases">
        <authorList>
            <person name="Mural R.J."/>
            <person name="Istrail S."/>
            <person name="Sutton G.G."/>
            <person name="Florea L."/>
            <person name="Halpern A.L."/>
            <person name="Mobarry C.M."/>
            <person name="Lippert R."/>
            <person name="Walenz B."/>
            <person name="Shatkay H."/>
            <person name="Dew I."/>
            <person name="Miller J.R."/>
            <person name="Flanigan M.J."/>
            <person name="Edwards N.J."/>
            <person name="Bolanos R."/>
            <person name="Fasulo D."/>
            <person name="Halldorsson B.V."/>
            <person name="Hannenhalli S."/>
            <person name="Turner R."/>
            <person name="Yooseph S."/>
            <person name="Lu F."/>
            <person name="Nusskern D.R."/>
            <person name="Shue B.C."/>
            <person name="Zheng X.H."/>
            <person name="Zhong F."/>
            <person name="Delcher A.L."/>
            <person name="Huson D.H."/>
            <person name="Kravitz S.A."/>
            <person name="Mouchard L."/>
            <person name="Reinert K."/>
            <person name="Remington K.A."/>
            <person name="Clark A.G."/>
            <person name="Waterman M.S."/>
            <person name="Eichler E.E."/>
            <person name="Adams M.D."/>
            <person name="Hunkapiller M.W."/>
            <person name="Myers E.W."/>
            <person name="Venter J.C."/>
        </authorList>
    </citation>
    <scope>NUCLEOTIDE SEQUENCE [LARGE SCALE GENOMIC DNA]</scope>
</reference>
<reference key="6">
    <citation type="journal article" date="2004" name="Genome Res.">
        <title>The status, quality, and expansion of the NIH full-length cDNA project: the Mammalian Gene Collection (MGC).</title>
        <authorList>
            <consortium name="The MGC Project Team"/>
        </authorList>
    </citation>
    <scope>NUCLEOTIDE SEQUENCE [LARGE SCALE MRNA] (ISOFORM 2)</scope>
    <source>
        <tissue>Lung</tissue>
    </source>
</reference>
<reference key="7">
    <citation type="journal article" date="2009" name="Am. J. Hum. Genet.">
        <title>Familial hemophagocytic lymphohistiocytosis type 5 (FHL-5) is caused by mutations in Munc18-2 and impaired binding to syntaxin 11.</title>
        <authorList>
            <person name="zur Stadt U."/>
            <person name="Rohr J."/>
            <person name="Seifert W."/>
            <person name="Koch F."/>
            <person name="Grieve S."/>
            <person name="Pagel J."/>
            <person name="Strauss J."/>
            <person name="Kasper B."/>
            <person name="Nuernberg G."/>
            <person name="Becker C."/>
            <person name="Maul-Pavicic A."/>
            <person name="Beutel K."/>
            <person name="Janka G."/>
            <person name="Griffiths G."/>
            <person name="Ehl S."/>
            <person name="Hennies H.C."/>
        </authorList>
    </citation>
    <scope>FUNCTION</scope>
    <scope>INTERACTION WITH STX11</scope>
    <scope>VARIANTS FHL5 PRO-209; ILE-232 DEL; HIS-292; TRP-405; GLN-405 AND LEU-477</scope>
    <scope>CHARACTERIZATION OF VARIANTS FHL5 ILE-232 DEL; HIS-292; TRP-405; GLN-405 AND LEU-477</scope>
</reference>
<reference key="8">
    <citation type="journal article" date="2009" name="J. Clin. Invest.">
        <title>Munc18-2 deficiency causes familial hemophagocytic lymphohistiocytosis type 5 and impairs cytotoxic granule exocytosis in patient NK cells.</title>
        <authorList>
            <person name="Cote M."/>
            <person name="Menager M.M."/>
            <person name="Burgess A."/>
            <person name="Mahlaoui N."/>
            <person name="Picard C."/>
            <person name="Schaffner C."/>
            <person name="Al-Manjomi F."/>
            <person name="Al-Harbi M."/>
            <person name="Alangari A."/>
            <person name="Le Deist F."/>
            <person name="Gennery A.R."/>
            <person name="Prince N."/>
            <person name="Cariou A."/>
            <person name="Nitschke P."/>
            <person name="Blank U."/>
            <person name="El-Ghazali G."/>
            <person name="Menasche G."/>
            <person name="Latour S."/>
            <person name="Fischer A."/>
            <person name="de Saint Basile G."/>
        </authorList>
    </citation>
    <scope>FUNCTION</scope>
    <scope>INTERACTION WITH STX11</scope>
    <scope>VARIANT FHL5 LEU-477</scope>
</reference>
<reference key="9">
    <citation type="journal article" date="2011" name="BMC Syst. Biol.">
        <title>Initial characterization of the human central proteome.</title>
        <authorList>
            <person name="Burkard T.R."/>
            <person name="Planyavsky M."/>
            <person name="Kaupe I."/>
            <person name="Breitwieser F.P."/>
            <person name="Buerckstuemmer T."/>
            <person name="Bennett K.L."/>
            <person name="Superti-Furga G."/>
            <person name="Colinge J."/>
        </authorList>
    </citation>
    <scope>IDENTIFICATION BY MASS SPECTROMETRY [LARGE SCALE ANALYSIS]</scope>
</reference>
<reference key="10">
    <citation type="journal article" date="2012" name="Proc. Natl. Acad. Sci. U.S.A.">
        <title>N-terminal acetylome analyses and functional insights of the N-terminal acetyltransferase NatB.</title>
        <authorList>
            <person name="Van Damme P."/>
            <person name="Lasa M."/>
            <person name="Polevoda B."/>
            <person name="Gazquez C."/>
            <person name="Elosegui-Artola A."/>
            <person name="Kim D.S."/>
            <person name="De Juan-Pardo E."/>
            <person name="Demeyer K."/>
            <person name="Hole K."/>
            <person name="Larrea E."/>
            <person name="Timmerman E."/>
            <person name="Prieto J."/>
            <person name="Arnesen T."/>
            <person name="Sherman F."/>
            <person name="Gevaert K."/>
            <person name="Aldabe R."/>
        </authorList>
    </citation>
    <scope>IDENTIFICATION BY MASS SPECTROMETRY [LARGE SCALE ANALYSIS]</scope>
</reference>
<reference key="11">
    <citation type="journal article" date="2013" name="J. Proteome Res.">
        <title>Toward a comprehensive characterization of a human cancer cell phosphoproteome.</title>
        <authorList>
            <person name="Zhou H."/>
            <person name="Di Palma S."/>
            <person name="Preisinger C."/>
            <person name="Peng M."/>
            <person name="Polat A.N."/>
            <person name="Heck A.J."/>
            <person name="Mohammed S."/>
        </authorList>
    </citation>
    <scope>IDENTIFICATION BY MASS SPECTROMETRY [LARGE SCALE ANALYSIS]</scope>
    <source>
        <tissue>Erythroleukemia</tissue>
    </source>
</reference>
<reference key="12">
    <citation type="journal article" date="2015" name="Proteomics">
        <title>N-terminome analysis of the human mitochondrial proteome.</title>
        <authorList>
            <person name="Vaca Jacome A.S."/>
            <person name="Rabilloud T."/>
            <person name="Schaeffer-Reiss C."/>
            <person name="Rompais M."/>
            <person name="Ayoub D."/>
            <person name="Lane L."/>
            <person name="Bairoch A."/>
            <person name="Van Dorsselaer A."/>
            <person name="Carapito C."/>
        </authorList>
    </citation>
    <scope>IDENTIFICATION BY MASS SPECTROMETRY [LARGE SCALE ANALYSIS]</scope>
</reference>
<sequence>MAPSGLKAVVGEKILSGVIRSVKKDGEWKVLIMDHPSMRILSSCCKMSDILAEGITIVEDINKRREPIPSLEAIYLLSPTEKSVQALIKDFQGTPTFTYKAAHIFFTDTCPEPLFSELGRSRLAKVVKTLKEIHLAFLPYEAQVFSLDAPHSTYNLYCPFRAEERTRQLEVLAQQIATLCATLQEYPAIRYRKGPEDTAQLAHAVLAKLNAFKADTPSLGEGPEKTRSQLLIMDRAADPVSPLLHELTFQAMAYDLLDIEQDTYRYETTGLSEAREKAVLLDEDDDLWVELRHMHIADVSKKVTELLRTFCESKRLTTDKANIKDLSQILKKMPQYQKELNKYSTHLHLADDCMKHFKGSVEKLCSVEQDLAMGSDAEGEKIKDSMKLIVPVLLDAAVPAYDKIRVLLLYILLRNGVSEENLAKLIQHANVQAHSSLIRNLEQLGGTVTNPGGSGTSSRLEPRERMEPTYQLSRWTPVIKDVMEDAVEDRLDRNLWPFVSDPAPTASSQAAVSARFGHWHKNKAGIEARAGPRLIVYVMGGVAMSEMRAAYEVTRATEGKWEVLIGSSHILTPTRFLDDLKALDKKLEDIALP</sequence>
<accession>Q15833</accession>
<accession>B4E175</accession>
<accession>E7EQD5</accession>
<accession>Q9BU65</accession>
<gene>
    <name type="primary">STXBP2</name>
    <name type="synonym">UNC18B</name>
</gene>